<dbReference type="EMBL" id="CP000259">
    <property type="protein sequence ID" value="ABF31787.1"/>
    <property type="molecule type" value="Genomic_DNA"/>
</dbReference>
<dbReference type="RefSeq" id="WP_002985307.1">
    <property type="nucleotide sequence ID" value="NC_008021.1"/>
</dbReference>
<dbReference type="SMR" id="Q1JMM5"/>
<dbReference type="KEGG" id="spk:MGAS9429_Spy0599"/>
<dbReference type="HOGENOM" id="CLU_114306_2_1_9"/>
<dbReference type="Proteomes" id="UP000002433">
    <property type="component" value="Chromosome"/>
</dbReference>
<dbReference type="GO" id="GO:1990904">
    <property type="term" value="C:ribonucleoprotein complex"/>
    <property type="evidence" value="ECO:0007669"/>
    <property type="project" value="UniProtKB-KW"/>
</dbReference>
<dbReference type="GO" id="GO:0005840">
    <property type="term" value="C:ribosome"/>
    <property type="evidence" value="ECO:0007669"/>
    <property type="project" value="UniProtKB-KW"/>
</dbReference>
<dbReference type="GO" id="GO:0003735">
    <property type="term" value="F:structural constituent of ribosome"/>
    <property type="evidence" value="ECO:0007669"/>
    <property type="project" value="InterPro"/>
</dbReference>
<dbReference type="GO" id="GO:0006412">
    <property type="term" value="P:translation"/>
    <property type="evidence" value="ECO:0007669"/>
    <property type="project" value="UniProtKB-UniRule"/>
</dbReference>
<dbReference type="Gene3D" id="4.10.830.30">
    <property type="entry name" value="Ribosomal protein L31"/>
    <property type="match status" value="1"/>
</dbReference>
<dbReference type="HAMAP" id="MF_00502">
    <property type="entry name" value="Ribosomal_bL31_2"/>
    <property type="match status" value="1"/>
</dbReference>
<dbReference type="InterPro" id="IPR034704">
    <property type="entry name" value="Ribosomal_bL28/bL31-like_sf"/>
</dbReference>
<dbReference type="InterPro" id="IPR002150">
    <property type="entry name" value="Ribosomal_bL31"/>
</dbReference>
<dbReference type="InterPro" id="IPR027493">
    <property type="entry name" value="Ribosomal_bL31_B"/>
</dbReference>
<dbReference type="InterPro" id="IPR042105">
    <property type="entry name" value="Ribosomal_bL31_sf"/>
</dbReference>
<dbReference type="NCBIfam" id="TIGR00105">
    <property type="entry name" value="L31"/>
    <property type="match status" value="1"/>
</dbReference>
<dbReference type="NCBIfam" id="NF002462">
    <property type="entry name" value="PRK01678.1"/>
    <property type="match status" value="1"/>
</dbReference>
<dbReference type="PANTHER" id="PTHR33280">
    <property type="entry name" value="50S RIBOSOMAL PROTEIN L31, CHLOROPLASTIC"/>
    <property type="match status" value="1"/>
</dbReference>
<dbReference type="PANTHER" id="PTHR33280:SF1">
    <property type="entry name" value="LARGE RIBOSOMAL SUBUNIT PROTEIN BL31C"/>
    <property type="match status" value="1"/>
</dbReference>
<dbReference type="Pfam" id="PF01197">
    <property type="entry name" value="Ribosomal_L31"/>
    <property type="match status" value="1"/>
</dbReference>
<dbReference type="PRINTS" id="PR01249">
    <property type="entry name" value="RIBOSOMALL31"/>
</dbReference>
<dbReference type="SUPFAM" id="SSF143800">
    <property type="entry name" value="L28p-like"/>
    <property type="match status" value="1"/>
</dbReference>
<dbReference type="PROSITE" id="PS01143">
    <property type="entry name" value="RIBOSOMAL_L31"/>
    <property type="match status" value="1"/>
</dbReference>
<sequence>MRKDIHPDYRPVVFLDTTTGYQFLSGSTKASKETVEFEGETYPLIRVEISSDSHPFYTGRQKFTQADGRVDRFNKKYGLKDANAAK</sequence>
<reference key="1">
    <citation type="journal article" date="2006" name="Proc. Natl. Acad. Sci. U.S.A.">
        <title>Molecular genetic anatomy of inter- and intraserotype variation in the human bacterial pathogen group A Streptococcus.</title>
        <authorList>
            <person name="Beres S.B."/>
            <person name="Richter E.W."/>
            <person name="Nagiec M.J."/>
            <person name="Sumby P."/>
            <person name="Porcella S.F."/>
            <person name="DeLeo F.R."/>
            <person name="Musser J.M."/>
        </authorList>
    </citation>
    <scope>NUCLEOTIDE SEQUENCE [LARGE SCALE GENOMIC DNA]</scope>
    <source>
        <strain>MGAS9429</strain>
    </source>
</reference>
<proteinExistence type="inferred from homology"/>
<comment type="subunit">
    <text evidence="1">Part of the 50S ribosomal subunit.</text>
</comment>
<comment type="similarity">
    <text evidence="1">Belongs to the bacterial ribosomal protein bL31 family. Type B subfamily.</text>
</comment>
<name>RL31B_STRPC</name>
<keyword id="KW-0687">Ribonucleoprotein</keyword>
<keyword id="KW-0689">Ribosomal protein</keyword>
<protein>
    <recommendedName>
        <fullName evidence="1">Large ribosomal subunit protein bL31B</fullName>
    </recommendedName>
    <alternativeName>
        <fullName evidence="2">50S ribosomal protein L31 type B</fullName>
    </alternativeName>
</protein>
<organism>
    <name type="scientific">Streptococcus pyogenes serotype M12 (strain MGAS9429)</name>
    <dbReference type="NCBI Taxonomy" id="370551"/>
    <lineage>
        <taxon>Bacteria</taxon>
        <taxon>Bacillati</taxon>
        <taxon>Bacillota</taxon>
        <taxon>Bacilli</taxon>
        <taxon>Lactobacillales</taxon>
        <taxon>Streptococcaceae</taxon>
        <taxon>Streptococcus</taxon>
    </lineage>
</organism>
<feature type="chain" id="PRO_0000259127" description="Large ribosomal subunit protein bL31B">
    <location>
        <begin position="1"/>
        <end position="86"/>
    </location>
</feature>
<gene>
    <name evidence="1" type="primary">rpmE2</name>
    <name type="ordered locus">MGAS9429_Spy0599</name>
</gene>
<accession>Q1JMM5</accession>
<evidence type="ECO:0000255" key="1">
    <source>
        <dbReference type="HAMAP-Rule" id="MF_00502"/>
    </source>
</evidence>
<evidence type="ECO:0000305" key="2"/>